<accession>Q5F5T6</accession>
<feature type="chain" id="PRO_0000233516" description="Small ribosomal subunit protein uS17">
    <location>
        <begin position="1"/>
        <end position="87"/>
    </location>
</feature>
<dbReference type="EMBL" id="AE004969">
    <property type="protein sequence ID" value="AAW90451.1"/>
    <property type="molecule type" value="Genomic_DNA"/>
</dbReference>
<dbReference type="RefSeq" id="WP_003690077.1">
    <property type="nucleotide sequence ID" value="NC_002946.2"/>
</dbReference>
<dbReference type="RefSeq" id="YP_208863.1">
    <property type="nucleotide sequence ID" value="NC_002946.2"/>
</dbReference>
<dbReference type="SMR" id="Q5F5T6"/>
<dbReference type="STRING" id="242231.NGO_1830"/>
<dbReference type="GeneID" id="66754304"/>
<dbReference type="KEGG" id="ngo:NGO_1830"/>
<dbReference type="PATRIC" id="fig|242231.10.peg.2200"/>
<dbReference type="HOGENOM" id="CLU_073626_1_1_4"/>
<dbReference type="Proteomes" id="UP000000535">
    <property type="component" value="Chromosome"/>
</dbReference>
<dbReference type="GO" id="GO:0022627">
    <property type="term" value="C:cytosolic small ribosomal subunit"/>
    <property type="evidence" value="ECO:0007669"/>
    <property type="project" value="TreeGrafter"/>
</dbReference>
<dbReference type="GO" id="GO:0019843">
    <property type="term" value="F:rRNA binding"/>
    <property type="evidence" value="ECO:0007669"/>
    <property type="project" value="UniProtKB-UniRule"/>
</dbReference>
<dbReference type="GO" id="GO:0003735">
    <property type="term" value="F:structural constituent of ribosome"/>
    <property type="evidence" value="ECO:0007669"/>
    <property type="project" value="InterPro"/>
</dbReference>
<dbReference type="GO" id="GO:0006412">
    <property type="term" value="P:translation"/>
    <property type="evidence" value="ECO:0007669"/>
    <property type="project" value="UniProtKB-UniRule"/>
</dbReference>
<dbReference type="CDD" id="cd00364">
    <property type="entry name" value="Ribosomal_uS17"/>
    <property type="match status" value="1"/>
</dbReference>
<dbReference type="Gene3D" id="2.40.50.140">
    <property type="entry name" value="Nucleic acid-binding proteins"/>
    <property type="match status" value="1"/>
</dbReference>
<dbReference type="HAMAP" id="MF_01345_B">
    <property type="entry name" value="Ribosomal_uS17_B"/>
    <property type="match status" value="1"/>
</dbReference>
<dbReference type="InterPro" id="IPR012340">
    <property type="entry name" value="NA-bd_OB-fold"/>
</dbReference>
<dbReference type="InterPro" id="IPR000266">
    <property type="entry name" value="Ribosomal_uS17"/>
</dbReference>
<dbReference type="InterPro" id="IPR019984">
    <property type="entry name" value="Ribosomal_uS17_bact/chlr"/>
</dbReference>
<dbReference type="InterPro" id="IPR019979">
    <property type="entry name" value="Ribosomal_uS17_CS"/>
</dbReference>
<dbReference type="NCBIfam" id="NF004123">
    <property type="entry name" value="PRK05610.1"/>
    <property type="match status" value="1"/>
</dbReference>
<dbReference type="NCBIfam" id="TIGR03635">
    <property type="entry name" value="uS17_bact"/>
    <property type="match status" value="1"/>
</dbReference>
<dbReference type="PANTHER" id="PTHR10744">
    <property type="entry name" value="40S RIBOSOMAL PROTEIN S11 FAMILY MEMBER"/>
    <property type="match status" value="1"/>
</dbReference>
<dbReference type="PANTHER" id="PTHR10744:SF1">
    <property type="entry name" value="SMALL RIBOSOMAL SUBUNIT PROTEIN US17M"/>
    <property type="match status" value="1"/>
</dbReference>
<dbReference type="Pfam" id="PF00366">
    <property type="entry name" value="Ribosomal_S17"/>
    <property type="match status" value="1"/>
</dbReference>
<dbReference type="PRINTS" id="PR00973">
    <property type="entry name" value="RIBOSOMALS17"/>
</dbReference>
<dbReference type="SUPFAM" id="SSF50249">
    <property type="entry name" value="Nucleic acid-binding proteins"/>
    <property type="match status" value="1"/>
</dbReference>
<dbReference type="PROSITE" id="PS00056">
    <property type="entry name" value="RIBOSOMAL_S17"/>
    <property type="match status" value="1"/>
</dbReference>
<keyword id="KW-1185">Reference proteome</keyword>
<keyword id="KW-0687">Ribonucleoprotein</keyword>
<keyword id="KW-0689">Ribosomal protein</keyword>
<keyword id="KW-0694">RNA-binding</keyword>
<keyword id="KW-0699">rRNA-binding</keyword>
<sequence length="87" mass="9820">MSETKNVRTLQGKVVSDKMDKTVTVLVERKVKHSLYGKIIRLSTKIHAHDENNQYGIGDVVVISESRPLSKTKSWVVSELVEKARSI</sequence>
<proteinExistence type="inferred from homology"/>
<comment type="function">
    <text evidence="1">One of the primary rRNA binding proteins, it binds specifically to the 5'-end of 16S ribosomal RNA.</text>
</comment>
<comment type="subunit">
    <text evidence="1">Part of the 30S ribosomal subunit.</text>
</comment>
<comment type="similarity">
    <text evidence="1">Belongs to the universal ribosomal protein uS17 family.</text>
</comment>
<gene>
    <name evidence="1" type="primary">rpsQ</name>
    <name type="ordered locus">NGO_1830</name>
</gene>
<reference key="1">
    <citation type="submission" date="2003-03" db="EMBL/GenBank/DDBJ databases">
        <title>The complete genome sequence of Neisseria gonorrhoeae.</title>
        <authorList>
            <person name="Lewis L.A."/>
            <person name="Gillaspy A.F."/>
            <person name="McLaughlin R.E."/>
            <person name="Gipson M."/>
            <person name="Ducey T.F."/>
            <person name="Ownbey T."/>
            <person name="Hartman K."/>
            <person name="Nydick C."/>
            <person name="Carson M.B."/>
            <person name="Vaughn J."/>
            <person name="Thomson C."/>
            <person name="Song L."/>
            <person name="Lin S."/>
            <person name="Yuan X."/>
            <person name="Najar F."/>
            <person name="Zhan M."/>
            <person name="Ren Q."/>
            <person name="Zhu H."/>
            <person name="Qi S."/>
            <person name="Kenton S.M."/>
            <person name="Lai H."/>
            <person name="White J.D."/>
            <person name="Clifton S."/>
            <person name="Roe B.A."/>
            <person name="Dyer D.W."/>
        </authorList>
    </citation>
    <scope>NUCLEOTIDE SEQUENCE [LARGE SCALE GENOMIC DNA]</scope>
    <source>
        <strain>ATCC 700825 / FA 1090</strain>
    </source>
</reference>
<protein>
    <recommendedName>
        <fullName evidence="1">Small ribosomal subunit protein uS17</fullName>
    </recommendedName>
    <alternativeName>
        <fullName evidence="2">30S ribosomal protein S17</fullName>
    </alternativeName>
</protein>
<name>RS17_NEIG1</name>
<organism>
    <name type="scientific">Neisseria gonorrhoeae (strain ATCC 700825 / FA 1090)</name>
    <dbReference type="NCBI Taxonomy" id="242231"/>
    <lineage>
        <taxon>Bacteria</taxon>
        <taxon>Pseudomonadati</taxon>
        <taxon>Pseudomonadota</taxon>
        <taxon>Betaproteobacteria</taxon>
        <taxon>Neisseriales</taxon>
        <taxon>Neisseriaceae</taxon>
        <taxon>Neisseria</taxon>
    </lineage>
</organism>
<evidence type="ECO:0000255" key="1">
    <source>
        <dbReference type="HAMAP-Rule" id="MF_01345"/>
    </source>
</evidence>
<evidence type="ECO:0000305" key="2"/>